<feature type="chain" id="PRO_1000123061" description="Lipid-A-disaccharide synthase">
    <location>
        <begin position="1"/>
        <end position="382"/>
    </location>
</feature>
<comment type="function">
    <text evidence="1">Condensation of UDP-2,3-diacylglucosamine and 2,3-diacylglucosamine-1-phosphate to form lipid A disaccharide, a precursor of lipid A, a phosphorylated glycolipid that anchors the lipopolysaccharide to the outer membrane of the cell.</text>
</comment>
<comment type="catalytic activity">
    <reaction evidence="1">
        <text>2-N,3-O-bis[(3R)-3-hydroxytetradecanoyl]-alpha-D-glucosaminyl 1-phosphate + UDP-2-N,3-O-bis[(3R)-3-hydroxytetradecanoyl]-alpha-D-glucosamine = lipid A disaccharide (E. coli) + UDP + H(+)</text>
        <dbReference type="Rhea" id="RHEA:22668"/>
        <dbReference type="ChEBI" id="CHEBI:15378"/>
        <dbReference type="ChEBI" id="CHEBI:57957"/>
        <dbReference type="ChEBI" id="CHEBI:58223"/>
        <dbReference type="ChEBI" id="CHEBI:58466"/>
        <dbReference type="ChEBI" id="CHEBI:78847"/>
    </reaction>
</comment>
<comment type="catalytic activity">
    <reaction evidence="1">
        <text>a lipid X + a UDP-2-N,3-O-bis[(3R)-3-hydroxyacyl]-alpha-D-glucosamine = a lipid A disaccharide + UDP + H(+)</text>
        <dbReference type="Rhea" id="RHEA:67828"/>
        <dbReference type="ChEBI" id="CHEBI:15378"/>
        <dbReference type="ChEBI" id="CHEBI:58223"/>
        <dbReference type="ChEBI" id="CHEBI:137748"/>
        <dbReference type="ChEBI" id="CHEBI:176338"/>
        <dbReference type="ChEBI" id="CHEBI:176343"/>
        <dbReference type="EC" id="2.4.1.182"/>
    </reaction>
</comment>
<comment type="pathway">
    <text evidence="1">Glycolipid biosynthesis; lipid IV(A) biosynthesis; lipid IV(A) from (3R)-3-hydroxytetradecanoyl-[acyl-carrier-protein] and UDP-N-acetyl-alpha-D-glucosamine: step 5/6.</text>
</comment>
<comment type="similarity">
    <text evidence="1">Belongs to the LpxB family.</text>
</comment>
<name>LPXB_SALHS</name>
<reference key="1">
    <citation type="journal article" date="2011" name="J. Bacteriol.">
        <title>Comparative genomics of 28 Salmonella enterica isolates: evidence for CRISPR-mediated adaptive sublineage evolution.</title>
        <authorList>
            <person name="Fricke W.F."/>
            <person name="Mammel M.K."/>
            <person name="McDermott P.F."/>
            <person name="Tartera C."/>
            <person name="White D.G."/>
            <person name="Leclerc J.E."/>
            <person name="Ravel J."/>
            <person name="Cebula T.A."/>
        </authorList>
    </citation>
    <scope>NUCLEOTIDE SEQUENCE [LARGE SCALE GENOMIC DNA]</scope>
    <source>
        <strain>SL476</strain>
    </source>
</reference>
<gene>
    <name evidence="1" type="primary">lpxB</name>
    <name type="ordered locus">SeHA_C0267</name>
</gene>
<dbReference type="EC" id="2.4.1.182" evidence="1"/>
<dbReference type="EMBL" id="CP001120">
    <property type="protein sequence ID" value="ACF68709.1"/>
    <property type="molecule type" value="Genomic_DNA"/>
</dbReference>
<dbReference type="RefSeq" id="WP_000741216.1">
    <property type="nucleotide sequence ID" value="NC_011083.1"/>
</dbReference>
<dbReference type="SMR" id="B4TK57"/>
<dbReference type="CAZy" id="GT19">
    <property type="family name" value="Glycosyltransferase Family 19"/>
</dbReference>
<dbReference type="KEGG" id="seh:SeHA_C0267"/>
<dbReference type="HOGENOM" id="CLU_036577_3_0_6"/>
<dbReference type="UniPathway" id="UPA00359">
    <property type="reaction ID" value="UER00481"/>
</dbReference>
<dbReference type="Proteomes" id="UP000001866">
    <property type="component" value="Chromosome"/>
</dbReference>
<dbReference type="GO" id="GO:0016020">
    <property type="term" value="C:membrane"/>
    <property type="evidence" value="ECO:0007669"/>
    <property type="project" value="GOC"/>
</dbReference>
<dbReference type="GO" id="GO:0008915">
    <property type="term" value="F:lipid-A-disaccharide synthase activity"/>
    <property type="evidence" value="ECO:0007669"/>
    <property type="project" value="UniProtKB-UniRule"/>
</dbReference>
<dbReference type="GO" id="GO:0005543">
    <property type="term" value="F:phospholipid binding"/>
    <property type="evidence" value="ECO:0007669"/>
    <property type="project" value="TreeGrafter"/>
</dbReference>
<dbReference type="GO" id="GO:0009245">
    <property type="term" value="P:lipid A biosynthetic process"/>
    <property type="evidence" value="ECO:0007669"/>
    <property type="project" value="UniProtKB-UniRule"/>
</dbReference>
<dbReference type="CDD" id="cd01635">
    <property type="entry name" value="Glycosyltransferase_GTB-type"/>
    <property type="match status" value="1"/>
</dbReference>
<dbReference type="HAMAP" id="MF_00392">
    <property type="entry name" value="LpxB"/>
    <property type="match status" value="1"/>
</dbReference>
<dbReference type="InterPro" id="IPR003835">
    <property type="entry name" value="Glyco_trans_19"/>
</dbReference>
<dbReference type="NCBIfam" id="TIGR00215">
    <property type="entry name" value="lpxB"/>
    <property type="match status" value="1"/>
</dbReference>
<dbReference type="PANTHER" id="PTHR30372">
    <property type="entry name" value="LIPID-A-DISACCHARIDE SYNTHASE"/>
    <property type="match status" value="1"/>
</dbReference>
<dbReference type="PANTHER" id="PTHR30372:SF4">
    <property type="entry name" value="LIPID-A-DISACCHARIDE SYNTHASE, MITOCHONDRIAL-RELATED"/>
    <property type="match status" value="1"/>
</dbReference>
<dbReference type="Pfam" id="PF02684">
    <property type="entry name" value="LpxB"/>
    <property type="match status" value="1"/>
</dbReference>
<dbReference type="SUPFAM" id="SSF53756">
    <property type="entry name" value="UDP-Glycosyltransferase/glycogen phosphorylase"/>
    <property type="match status" value="1"/>
</dbReference>
<evidence type="ECO:0000255" key="1">
    <source>
        <dbReference type="HAMAP-Rule" id="MF_00392"/>
    </source>
</evidence>
<organism>
    <name type="scientific">Salmonella heidelberg (strain SL476)</name>
    <dbReference type="NCBI Taxonomy" id="454169"/>
    <lineage>
        <taxon>Bacteria</taxon>
        <taxon>Pseudomonadati</taxon>
        <taxon>Pseudomonadota</taxon>
        <taxon>Gammaproteobacteria</taxon>
        <taxon>Enterobacterales</taxon>
        <taxon>Enterobacteriaceae</taxon>
        <taxon>Salmonella</taxon>
    </lineage>
</organism>
<keyword id="KW-0328">Glycosyltransferase</keyword>
<keyword id="KW-0441">Lipid A biosynthesis</keyword>
<keyword id="KW-0444">Lipid biosynthesis</keyword>
<keyword id="KW-0443">Lipid metabolism</keyword>
<keyword id="KW-0808">Transferase</keyword>
<proteinExistence type="inferred from homology"/>
<sequence>MAAQRPLTIALVAGETSGDILGAGLIRALKARVPNARFVGVAGPRMQAEGCEAWYEMEELAVMGIVEVLGRLRRLLHIRADLTRRFTELKPDVFVGIDAPDFNITLEGNLKKQGIKTIHYVSPSVWAWRQKRVFKIGRSTHMVLAFLPFEKAFYDKFNVPCRFIGHTMADAMPLDPDKNAARDVLGIPHDAHCLALLPGSRGAEVEMLSADFLKTAQLLRQRYPDLEVVVPLVNAKRREQFEKIKAEVAPDLAVHLLDGMAREAMIASDAALLASGTAALECMLAKCPMVVGYRMKPFTFWLAKRLVKTEYVSLPNLLAGRELVKELLQEECEPQKLAEALLPLLANGKTSHAMHDTFRELHQQIRCNADEQAADAVLELAQ</sequence>
<protein>
    <recommendedName>
        <fullName evidence="1">Lipid-A-disaccharide synthase</fullName>
        <ecNumber evidence="1">2.4.1.182</ecNumber>
    </recommendedName>
</protein>
<accession>B4TK57</accession>